<gene>
    <name evidence="1" type="primary">rimP</name>
    <name type="ordered locus">HI_1282</name>
</gene>
<accession>P45138</accession>
<proteinExistence type="inferred from homology"/>
<evidence type="ECO:0000255" key="1">
    <source>
        <dbReference type="HAMAP-Rule" id="MF_01077"/>
    </source>
</evidence>
<evidence type="ECO:0000305" key="2"/>
<name>RIMP_HAEIN</name>
<protein>
    <recommendedName>
        <fullName evidence="1">Ribosome maturation factor RimP</fullName>
    </recommendedName>
</protein>
<dbReference type="EMBL" id="L42023">
    <property type="protein sequence ID" value="AAC22931.1"/>
    <property type="status" value="ALT_INIT"/>
    <property type="molecule type" value="Genomic_DNA"/>
</dbReference>
<dbReference type="PIR" id="I64169">
    <property type="entry name" value="I64169"/>
</dbReference>
<dbReference type="RefSeq" id="NP_439434.2">
    <property type="nucleotide sequence ID" value="NC_000907.1"/>
</dbReference>
<dbReference type="SMR" id="P45138"/>
<dbReference type="STRING" id="71421.HI_1282"/>
<dbReference type="EnsemblBacteria" id="AAC22931">
    <property type="protein sequence ID" value="AAC22931"/>
    <property type="gene ID" value="HI_1282"/>
</dbReference>
<dbReference type="KEGG" id="hin:HI_1282"/>
<dbReference type="PATRIC" id="fig|71421.8.peg.1334"/>
<dbReference type="eggNOG" id="COG0779">
    <property type="taxonomic scope" value="Bacteria"/>
</dbReference>
<dbReference type="HOGENOM" id="CLU_070525_1_1_6"/>
<dbReference type="OrthoDB" id="9805006at2"/>
<dbReference type="PhylomeDB" id="P45138"/>
<dbReference type="BioCyc" id="HINF71421:G1GJ1-1308-MONOMER"/>
<dbReference type="Proteomes" id="UP000000579">
    <property type="component" value="Chromosome"/>
</dbReference>
<dbReference type="GO" id="GO:0005829">
    <property type="term" value="C:cytosol"/>
    <property type="evidence" value="ECO:0000318"/>
    <property type="project" value="GO_Central"/>
</dbReference>
<dbReference type="GO" id="GO:0000028">
    <property type="term" value="P:ribosomal small subunit assembly"/>
    <property type="evidence" value="ECO:0000318"/>
    <property type="project" value="GO_Central"/>
</dbReference>
<dbReference type="GO" id="GO:0006412">
    <property type="term" value="P:translation"/>
    <property type="evidence" value="ECO:0000318"/>
    <property type="project" value="GO_Central"/>
</dbReference>
<dbReference type="CDD" id="cd01734">
    <property type="entry name" value="YlxS_C"/>
    <property type="match status" value="1"/>
</dbReference>
<dbReference type="FunFam" id="3.30.300.70:FF:000001">
    <property type="entry name" value="Ribosome maturation factor RimP"/>
    <property type="match status" value="1"/>
</dbReference>
<dbReference type="Gene3D" id="2.30.30.180">
    <property type="entry name" value="Ribosome maturation factor RimP, C-terminal domain"/>
    <property type="match status" value="1"/>
</dbReference>
<dbReference type="Gene3D" id="3.30.300.70">
    <property type="entry name" value="RimP-like superfamily, N-terminal"/>
    <property type="match status" value="1"/>
</dbReference>
<dbReference type="HAMAP" id="MF_01077">
    <property type="entry name" value="RimP"/>
    <property type="match status" value="1"/>
</dbReference>
<dbReference type="InterPro" id="IPR003728">
    <property type="entry name" value="Ribosome_maturation_RimP"/>
</dbReference>
<dbReference type="InterPro" id="IPR028998">
    <property type="entry name" value="RimP_C"/>
</dbReference>
<dbReference type="InterPro" id="IPR036847">
    <property type="entry name" value="RimP_C_sf"/>
</dbReference>
<dbReference type="InterPro" id="IPR028989">
    <property type="entry name" value="RimP_N"/>
</dbReference>
<dbReference type="InterPro" id="IPR035956">
    <property type="entry name" value="RimP_N_sf"/>
</dbReference>
<dbReference type="NCBIfam" id="NF000927">
    <property type="entry name" value="PRK00092.1-1"/>
    <property type="match status" value="1"/>
</dbReference>
<dbReference type="PANTHER" id="PTHR33867">
    <property type="entry name" value="RIBOSOME MATURATION FACTOR RIMP"/>
    <property type="match status" value="1"/>
</dbReference>
<dbReference type="PANTHER" id="PTHR33867:SF1">
    <property type="entry name" value="RIBOSOME MATURATION FACTOR RIMP"/>
    <property type="match status" value="1"/>
</dbReference>
<dbReference type="Pfam" id="PF17384">
    <property type="entry name" value="DUF150_C"/>
    <property type="match status" value="1"/>
</dbReference>
<dbReference type="Pfam" id="PF02576">
    <property type="entry name" value="RimP_N"/>
    <property type="match status" value="1"/>
</dbReference>
<dbReference type="SUPFAM" id="SSF74942">
    <property type="entry name" value="YhbC-like, C-terminal domain"/>
    <property type="match status" value="1"/>
</dbReference>
<dbReference type="SUPFAM" id="SSF75420">
    <property type="entry name" value="YhbC-like, N-terminal domain"/>
    <property type="match status" value="1"/>
</dbReference>
<comment type="function">
    <text evidence="1">Required for maturation of 30S ribosomal subunits.</text>
</comment>
<comment type="subcellular location">
    <subcellularLocation>
        <location evidence="1">Cytoplasm</location>
    </subcellularLocation>
</comment>
<comment type="similarity">
    <text evidence="1">Belongs to the RimP family.</text>
</comment>
<comment type="sequence caution" evidence="2">
    <conflict type="erroneous initiation">
        <sequence resource="EMBL-CDS" id="AAC22931"/>
    </conflict>
</comment>
<sequence length="151" mass="17267">MATLEQNLQEMLQDAVEDLGCELWGIECQRVGRFMTVRLFIDKDGGVTVDDCADVSRQVSAILDVEDPIADKYNLEVSSPGLDRPLFTLPQFERYIGQDIAVHLRIPVMERRKWQGKLERIEKDMITLIVDDQEQILVFGNIQKANVVAKF</sequence>
<feature type="chain" id="PRO_0000181876" description="Ribosome maturation factor RimP">
    <location>
        <begin position="1"/>
        <end position="151"/>
    </location>
</feature>
<organism>
    <name type="scientific">Haemophilus influenzae (strain ATCC 51907 / DSM 11121 / KW20 / Rd)</name>
    <dbReference type="NCBI Taxonomy" id="71421"/>
    <lineage>
        <taxon>Bacteria</taxon>
        <taxon>Pseudomonadati</taxon>
        <taxon>Pseudomonadota</taxon>
        <taxon>Gammaproteobacteria</taxon>
        <taxon>Pasteurellales</taxon>
        <taxon>Pasteurellaceae</taxon>
        <taxon>Haemophilus</taxon>
    </lineage>
</organism>
<reference key="1">
    <citation type="journal article" date="1995" name="Science">
        <title>Whole-genome random sequencing and assembly of Haemophilus influenzae Rd.</title>
        <authorList>
            <person name="Fleischmann R.D."/>
            <person name="Adams M.D."/>
            <person name="White O."/>
            <person name="Clayton R.A."/>
            <person name="Kirkness E.F."/>
            <person name="Kerlavage A.R."/>
            <person name="Bult C.J."/>
            <person name="Tomb J.-F."/>
            <person name="Dougherty B.A."/>
            <person name="Merrick J.M."/>
            <person name="McKenney K."/>
            <person name="Sutton G.G."/>
            <person name="FitzHugh W."/>
            <person name="Fields C.A."/>
            <person name="Gocayne J.D."/>
            <person name="Scott J.D."/>
            <person name="Shirley R."/>
            <person name="Liu L.-I."/>
            <person name="Glodek A."/>
            <person name="Kelley J.M."/>
            <person name="Weidman J.F."/>
            <person name="Phillips C.A."/>
            <person name="Spriggs T."/>
            <person name="Hedblom E."/>
            <person name="Cotton M.D."/>
            <person name="Utterback T.R."/>
            <person name="Hanna M.C."/>
            <person name="Nguyen D.T."/>
            <person name="Saudek D.M."/>
            <person name="Brandon R.C."/>
            <person name="Fine L.D."/>
            <person name="Fritchman J.L."/>
            <person name="Fuhrmann J.L."/>
            <person name="Geoghagen N.S.M."/>
            <person name="Gnehm C.L."/>
            <person name="McDonald L.A."/>
            <person name="Small K.V."/>
            <person name="Fraser C.M."/>
            <person name="Smith H.O."/>
            <person name="Venter J.C."/>
        </authorList>
    </citation>
    <scope>NUCLEOTIDE SEQUENCE [LARGE SCALE GENOMIC DNA]</scope>
    <source>
        <strain>ATCC 51907 / DSM 11121 / KW20 / Rd</strain>
    </source>
</reference>
<keyword id="KW-0963">Cytoplasm</keyword>
<keyword id="KW-1185">Reference proteome</keyword>
<keyword id="KW-0690">Ribosome biogenesis</keyword>